<gene>
    <name type="primary">DUS3</name>
    <name type="ORF">PGUG_00726</name>
</gene>
<sequence>MTTETEKRALEDDTVESKRIKYDKGIAPIKPEFIVENPSVPADDRYVNDDDAEAGDRNGEEKGKKKKRGQNKKRDMRQQHEEVRLCSSLLDPSNPGTCRFGPEHCRSTHDVTTYLAAKAPDIDGVCPVFKSIGYCPAGLKCRWLNSHYEDGKLKRDQSQIDAYASSGQGEVNKISTEAKLALQKKKYLFEVSDNVIKYLDSQVQSDENIAKREEAKENNASYVEAPFKIAEKKKLDLRGAKIVSPLTTVGNLPYRRLMKTLGADVTYSEMALSLPLLQATNSEWALPKAHSSEYPGFGVQIATSKHWAAAKAAEVIYKETTHVSELNLNCGCPIDLLYRQGQGSALMEQPARLLRILKGMNASSGDIPVTVKIRTGTKDNKNTAKSLVERVLAENDVAAITLHGRSRQQRYTKDADWEYIKEVGAVVTEWNNKKEEDKESSETNRTNFVGNGDVFTHEDWYNAVNTEGVDSVMVARGALIKPWIFEEVEAQQYLDKSATERLDILRKFADFSLEHWGSDEYGVGLSRRFMCEFLSFTHRYIPVGILERLPPKINQRPPQWRGRNELETLLGSTDYKDWIKITEMFYGKTGDNFTFIPKHKSNAYESG</sequence>
<reference key="1">
    <citation type="journal article" date="2009" name="Nature">
        <title>Evolution of pathogenicity and sexual reproduction in eight Candida genomes.</title>
        <authorList>
            <person name="Butler G."/>
            <person name="Rasmussen M.D."/>
            <person name="Lin M.F."/>
            <person name="Santos M.A.S."/>
            <person name="Sakthikumar S."/>
            <person name="Munro C.A."/>
            <person name="Rheinbay E."/>
            <person name="Grabherr M."/>
            <person name="Forche A."/>
            <person name="Reedy J.L."/>
            <person name="Agrafioti I."/>
            <person name="Arnaud M.B."/>
            <person name="Bates S."/>
            <person name="Brown A.J.P."/>
            <person name="Brunke S."/>
            <person name="Costanzo M.C."/>
            <person name="Fitzpatrick D.A."/>
            <person name="de Groot P.W.J."/>
            <person name="Harris D."/>
            <person name="Hoyer L.L."/>
            <person name="Hube B."/>
            <person name="Klis F.M."/>
            <person name="Kodira C."/>
            <person name="Lennard N."/>
            <person name="Logue M.E."/>
            <person name="Martin R."/>
            <person name="Neiman A.M."/>
            <person name="Nikolaou E."/>
            <person name="Quail M.A."/>
            <person name="Quinn J."/>
            <person name="Santos M.C."/>
            <person name="Schmitzberger F.F."/>
            <person name="Sherlock G."/>
            <person name="Shah P."/>
            <person name="Silverstein K.A.T."/>
            <person name="Skrzypek M.S."/>
            <person name="Soll D."/>
            <person name="Staggs R."/>
            <person name="Stansfield I."/>
            <person name="Stumpf M.P.H."/>
            <person name="Sudbery P.E."/>
            <person name="Srikantha T."/>
            <person name="Zeng Q."/>
            <person name="Berman J."/>
            <person name="Berriman M."/>
            <person name="Heitman J."/>
            <person name="Gow N.A.R."/>
            <person name="Lorenz M.C."/>
            <person name="Birren B.W."/>
            <person name="Kellis M."/>
            <person name="Cuomo C.A."/>
        </authorList>
    </citation>
    <scope>NUCLEOTIDE SEQUENCE [LARGE SCALE GENOMIC DNA]</scope>
    <source>
        <strain>ATCC 6260 / CBS 566 / DSM 6381 / JCM 1539 / NBRC 10279 / NRRL Y-324</strain>
    </source>
</reference>
<protein>
    <recommendedName>
        <fullName>tRNA-dihydrouridine(47) synthase [NAD(P)(+)]</fullName>
        <ecNumber evidence="1">1.3.1.89</ecNumber>
    </recommendedName>
    <alternativeName>
        <fullName>mRNA-dihydrouridine synthase DUS3</fullName>
        <ecNumber evidence="3">1.3.1.-</ecNumber>
    </alternativeName>
    <alternativeName>
        <fullName>tRNA-dihydrouridine synthase 3</fullName>
    </alternativeName>
</protein>
<keyword id="KW-0963">Cytoplasm</keyword>
<keyword id="KW-0285">Flavoprotein</keyword>
<keyword id="KW-0288">FMN</keyword>
<keyword id="KW-0479">Metal-binding</keyword>
<keyword id="KW-0507">mRNA processing</keyword>
<keyword id="KW-0520">NAD</keyword>
<keyword id="KW-0521">NADP</keyword>
<keyword id="KW-0539">Nucleus</keyword>
<keyword id="KW-0560">Oxidoreductase</keyword>
<keyword id="KW-1185">Reference proteome</keyword>
<keyword id="KW-0677">Repeat</keyword>
<keyword id="KW-0819">tRNA processing</keyword>
<keyword id="KW-0862">Zinc</keyword>
<keyword id="KW-0863">Zinc-finger</keyword>
<evidence type="ECO:0000250" key="1">
    <source>
        <dbReference type="UniProtKB" id="Q06053"/>
    </source>
</evidence>
<evidence type="ECO:0000250" key="2">
    <source>
        <dbReference type="UniProtKB" id="Q5SMC7"/>
    </source>
</evidence>
<evidence type="ECO:0000250" key="3">
    <source>
        <dbReference type="UniProtKB" id="Q9UTH9"/>
    </source>
</evidence>
<evidence type="ECO:0000255" key="4">
    <source>
        <dbReference type="PROSITE-ProRule" id="PRU00723"/>
    </source>
</evidence>
<evidence type="ECO:0000256" key="5">
    <source>
        <dbReference type="SAM" id="MobiDB-lite"/>
    </source>
</evidence>
<evidence type="ECO:0000305" key="6"/>
<organism>
    <name type="scientific">Meyerozyma guilliermondii (strain ATCC 6260 / CBS 566 / DSM 6381 / JCM 1539 / NBRC 10279 / NRRL Y-324)</name>
    <name type="common">Yeast</name>
    <name type="synonym">Candida guilliermondii</name>
    <dbReference type="NCBI Taxonomy" id="294746"/>
    <lineage>
        <taxon>Eukaryota</taxon>
        <taxon>Fungi</taxon>
        <taxon>Dikarya</taxon>
        <taxon>Ascomycota</taxon>
        <taxon>Saccharomycotina</taxon>
        <taxon>Pichiomycetes</taxon>
        <taxon>Debaryomycetaceae</taxon>
        <taxon>Meyerozyma</taxon>
    </lineage>
</organism>
<accession>A5DBS1</accession>
<dbReference type="EC" id="1.3.1.89" evidence="1"/>
<dbReference type="EC" id="1.3.1.-" evidence="3"/>
<dbReference type="EMBL" id="CH408155">
    <property type="protein sequence ID" value="EDK36628.2"/>
    <property type="molecule type" value="Genomic_DNA"/>
</dbReference>
<dbReference type="RefSeq" id="XP_001487349.1">
    <property type="nucleotide sequence ID" value="XM_001487299.1"/>
</dbReference>
<dbReference type="SMR" id="A5DBS1"/>
<dbReference type="FunCoup" id="A5DBS1">
    <property type="interactions" value="893"/>
</dbReference>
<dbReference type="STRING" id="294746.A5DBS1"/>
<dbReference type="GeneID" id="5129021"/>
<dbReference type="KEGG" id="pgu:PGUG_00726"/>
<dbReference type="VEuPathDB" id="FungiDB:PGUG_00726"/>
<dbReference type="eggNOG" id="KOG2333">
    <property type="taxonomic scope" value="Eukaryota"/>
</dbReference>
<dbReference type="HOGENOM" id="CLU_013299_7_3_1"/>
<dbReference type="InParanoid" id="A5DBS1"/>
<dbReference type="OMA" id="WSYIAEC"/>
<dbReference type="OrthoDB" id="259935at2759"/>
<dbReference type="Proteomes" id="UP000001997">
    <property type="component" value="Unassembled WGS sequence"/>
</dbReference>
<dbReference type="GO" id="GO:0005737">
    <property type="term" value="C:cytoplasm"/>
    <property type="evidence" value="ECO:0007669"/>
    <property type="project" value="UniProtKB-SubCell"/>
</dbReference>
<dbReference type="GO" id="GO:0034399">
    <property type="term" value="C:nuclear periphery"/>
    <property type="evidence" value="ECO:0007669"/>
    <property type="project" value="EnsemblFungi"/>
</dbReference>
<dbReference type="GO" id="GO:0050660">
    <property type="term" value="F:flavin adenine dinucleotide binding"/>
    <property type="evidence" value="ECO:0007669"/>
    <property type="project" value="InterPro"/>
</dbReference>
<dbReference type="GO" id="GO:0106414">
    <property type="term" value="F:mRNA dihydrouridine synthase activity"/>
    <property type="evidence" value="ECO:0007669"/>
    <property type="project" value="RHEA"/>
</dbReference>
<dbReference type="GO" id="GO:0003723">
    <property type="term" value="F:RNA binding"/>
    <property type="evidence" value="ECO:0007669"/>
    <property type="project" value="TreeGrafter"/>
</dbReference>
<dbReference type="GO" id="GO:0102265">
    <property type="term" value="F:tRNA-dihydrouridine47 synthase activity"/>
    <property type="evidence" value="ECO:0007669"/>
    <property type="project" value="UniProtKB-EC"/>
</dbReference>
<dbReference type="GO" id="GO:0008270">
    <property type="term" value="F:zinc ion binding"/>
    <property type="evidence" value="ECO:0007669"/>
    <property type="project" value="UniProtKB-KW"/>
</dbReference>
<dbReference type="GO" id="GO:0006397">
    <property type="term" value="P:mRNA processing"/>
    <property type="evidence" value="ECO:0007669"/>
    <property type="project" value="UniProtKB-KW"/>
</dbReference>
<dbReference type="CDD" id="cd02801">
    <property type="entry name" value="DUS_like_FMN"/>
    <property type="match status" value="1"/>
</dbReference>
<dbReference type="FunFam" id="3.20.20.70:FF:000145">
    <property type="entry name" value="tRNA-dihydrouridine(47) synthase [NAD(P)(+)]"/>
    <property type="match status" value="1"/>
</dbReference>
<dbReference type="Gene3D" id="3.20.20.70">
    <property type="entry name" value="Aldolase class I"/>
    <property type="match status" value="1"/>
</dbReference>
<dbReference type="InterPro" id="IPR013785">
    <property type="entry name" value="Aldolase_TIM"/>
</dbReference>
<dbReference type="InterPro" id="IPR035587">
    <property type="entry name" value="DUS-like_FMN-bd"/>
</dbReference>
<dbReference type="InterPro" id="IPR018517">
    <property type="entry name" value="tRNA_hU_synthase_CS"/>
</dbReference>
<dbReference type="InterPro" id="IPR000571">
    <property type="entry name" value="Znf_CCCH"/>
</dbReference>
<dbReference type="PANTHER" id="PTHR45846">
    <property type="entry name" value="TRNA-DIHYDROURIDINE(47) SYNTHASE [NAD(P)(+)]-LIKE"/>
    <property type="match status" value="1"/>
</dbReference>
<dbReference type="PANTHER" id="PTHR45846:SF1">
    <property type="entry name" value="TRNA-DIHYDROURIDINE(47) SYNTHASE [NAD(P)(+)]-LIKE"/>
    <property type="match status" value="1"/>
</dbReference>
<dbReference type="Pfam" id="PF01207">
    <property type="entry name" value="Dus"/>
    <property type="match status" value="1"/>
</dbReference>
<dbReference type="SUPFAM" id="SSF51395">
    <property type="entry name" value="FMN-linked oxidoreductases"/>
    <property type="match status" value="1"/>
</dbReference>
<dbReference type="PROSITE" id="PS01136">
    <property type="entry name" value="UPF0034"/>
    <property type="match status" value="1"/>
</dbReference>
<dbReference type="PROSITE" id="PS50103">
    <property type="entry name" value="ZF_C3H1"/>
    <property type="match status" value="2"/>
</dbReference>
<feature type="chain" id="PRO_0000330246" description="tRNA-dihydrouridine(47) synthase [NAD(P)(+)]">
    <location>
        <begin position="1"/>
        <end position="607"/>
    </location>
</feature>
<feature type="zinc finger region" description="C3H1-type 1" evidence="4">
    <location>
        <begin position="81"/>
        <end position="112"/>
    </location>
</feature>
<feature type="zinc finger region" description="C3H1-type 2" evidence="4">
    <location>
        <begin position="125"/>
        <end position="150"/>
    </location>
</feature>
<feature type="region of interest" description="Disordered" evidence="5">
    <location>
        <begin position="27"/>
        <end position="88"/>
    </location>
</feature>
<feature type="compositionally biased region" description="Basic and acidic residues" evidence="5">
    <location>
        <begin position="42"/>
        <end position="63"/>
    </location>
</feature>
<feature type="compositionally biased region" description="Basic and acidic residues" evidence="5">
    <location>
        <begin position="72"/>
        <end position="84"/>
    </location>
</feature>
<feature type="active site" description="Proton donor" evidence="2">
    <location>
        <position position="332"/>
    </location>
</feature>
<feature type="binding site" evidence="2">
    <location>
        <begin position="245"/>
        <end position="247"/>
    </location>
    <ligand>
        <name>FMN</name>
        <dbReference type="ChEBI" id="CHEBI:58210"/>
    </ligand>
</feature>
<feature type="binding site" evidence="2">
    <location>
        <position position="300"/>
    </location>
    <ligand>
        <name>FMN</name>
        <dbReference type="ChEBI" id="CHEBI:58210"/>
    </ligand>
</feature>
<feature type="binding site" evidence="2">
    <location>
        <position position="372"/>
    </location>
    <ligand>
        <name>FMN</name>
        <dbReference type="ChEBI" id="CHEBI:58210"/>
    </ligand>
</feature>
<feature type="binding site" evidence="2">
    <location>
        <position position="403"/>
    </location>
    <ligand>
        <name>FMN</name>
        <dbReference type="ChEBI" id="CHEBI:58210"/>
    </ligand>
</feature>
<feature type="binding site" evidence="2">
    <location>
        <begin position="451"/>
        <end position="453"/>
    </location>
    <ligand>
        <name>FMN</name>
        <dbReference type="ChEBI" id="CHEBI:58210"/>
    </ligand>
</feature>
<feature type="binding site" evidence="2">
    <location>
        <begin position="475"/>
        <end position="476"/>
    </location>
    <ligand>
        <name>FMN</name>
        <dbReference type="ChEBI" id="CHEBI:58210"/>
    </ligand>
</feature>
<proteinExistence type="inferred from homology"/>
<comment type="function">
    <text evidence="1 3">Catalyzes the synthesis of dihydrouridine, a modified base found in the D-loop of most tRNAs. Specifically modifies U47 in cytoplasmic tRNAs (By similarity). Catalyzes the synthesis of dihydrouridine in some mRNAs, thereby affecting their translation (By similarity).</text>
</comment>
<comment type="catalytic activity">
    <reaction evidence="1">
        <text>5,6-dihydrouridine(47) in tRNA + NAD(+) = uridine(47) in tRNA + NADH + H(+)</text>
        <dbReference type="Rhea" id="RHEA:53364"/>
        <dbReference type="Rhea" id="RHEA-COMP:13539"/>
        <dbReference type="Rhea" id="RHEA-COMP:13540"/>
        <dbReference type="ChEBI" id="CHEBI:15378"/>
        <dbReference type="ChEBI" id="CHEBI:57540"/>
        <dbReference type="ChEBI" id="CHEBI:57945"/>
        <dbReference type="ChEBI" id="CHEBI:65315"/>
        <dbReference type="ChEBI" id="CHEBI:74443"/>
        <dbReference type="EC" id="1.3.1.89"/>
    </reaction>
    <physiologicalReaction direction="right-to-left" evidence="1">
        <dbReference type="Rhea" id="RHEA:53366"/>
    </physiologicalReaction>
</comment>
<comment type="catalytic activity">
    <reaction evidence="1">
        <text>5,6-dihydrouridine(47) in tRNA + NADP(+) = uridine(47) in tRNA + NADPH + H(+)</text>
        <dbReference type="Rhea" id="RHEA:53360"/>
        <dbReference type="Rhea" id="RHEA-COMP:13539"/>
        <dbReference type="Rhea" id="RHEA-COMP:13540"/>
        <dbReference type="ChEBI" id="CHEBI:15378"/>
        <dbReference type="ChEBI" id="CHEBI:57783"/>
        <dbReference type="ChEBI" id="CHEBI:58349"/>
        <dbReference type="ChEBI" id="CHEBI:65315"/>
        <dbReference type="ChEBI" id="CHEBI:74443"/>
        <dbReference type="EC" id="1.3.1.89"/>
    </reaction>
    <physiologicalReaction direction="right-to-left" evidence="1">
        <dbReference type="Rhea" id="RHEA:53362"/>
    </physiologicalReaction>
</comment>
<comment type="catalytic activity">
    <reaction evidence="3">
        <text>a 5,6-dihydrouridine in mRNA + NAD(+) = a uridine in mRNA + NADH + H(+)</text>
        <dbReference type="Rhea" id="RHEA:69851"/>
        <dbReference type="Rhea" id="RHEA-COMP:14658"/>
        <dbReference type="Rhea" id="RHEA-COMP:17789"/>
        <dbReference type="ChEBI" id="CHEBI:15378"/>
        <dbReference type="ChEBI" id="CHEBI:57540"/>
        <dbReference type="ChEBI" id="CHEBI:57945"/>
        <dbReference type="ChEBI" id="CHEBI:65315"/>
        <dbReference type="ChEBI" id="CHEBI:74443"/>
    </reaction>
    <physiologicalReaction direction="right-to-left" evidence="3">
        <dbReference type="Rhea" id="RHEA:69853"/>
    </physiologicalReaction>
</comment>
<comment type="catalytic activity">
    <reaction evidence="3">
        <text>a 5,6-dihydrouridine in mRNA + NADP(+) = a uridine in mRNA + NADPH + H(+)</text>
        <dbReference type="Rhea" id="RHEA:69855"/>
        <dbReference type="Rhea" id="RHEA-COMP:14658"/>
        <dbReference type="Rhea" id="RHEA-COMP:17789"/>
        <dbReference type="ChEBI" id="CHEBI:15378"/>
        <dbReference type="ChEBI" id="CHEBI:57783"/>
        <dbReference type="ChEBI" id="CHEBI:58349"/>
        <dbReference type="ChEBI" id="CHEBI:65315"/>
        <dbReference type="ChEBI" id="CHEBI:74443"/>
    </reaction>
    <physiologicalReaction direction="right-to-left" evidence="3">
        <dbReference type="Rhea" id="RHEA:69857"/>
    </physiologicalReaction>
</comment>
<comment type="cofactor">
    <cofactor evidence="2">
        <name>FMN</name>
        <dbReference type="ChEBI" id="CHEBI:58210"/>
    </cofactor>
</comment>
<comment type="subcellular location">
    <subcellularLocation>
        <location evidence="1">Cytoplasm</location>
    </subcellularLocation>
    <subcellularLocation>
        <location evidence="1">Nucleus</location>
    </subcellularLocation>
</comment>
<comment type="similarity">
    <text evidence="6">Belongs to the Dus family. Dus3 subfamily.</text>
</comment>
<name>DUS3_PICGU</name>